<comment type="function">
    <text evidence="1">Death-promoting transcriptional repressor. May be involved in cyclin-D1/CCND1 mRNA stability through the SNARP complex which associates with both the 3'end of the CCND1 gene and its mRNA (By similarity).</text>
</comment>
<comment type="subunit">
    <text evidence="2">Interacts with Bcl-2 related proteins, EMD, with the adenovirus E1B 19 kDa protein and with DNA. Component of the SNARP complex which consists at least of SNIP1, SNW1, THRAP3, BCLAF1 and PNN (By similarity). Component of a MACOM-like complex, named WTAP complex, composed of WTAP, ZC3H13, CBLL1, KIAA1429, RBM15, BCLAF1 and THRAP3 (By similarity).</text>
</comment>
<comment type="subcellular location">
    <subcellularLocation>
        <location evidence="1">Cytoplasm</location>
    </subcellularLocation>
    <subcellularLocation>
        <location evidence="1">Nucleus</location>
    </subcellularLocation>
    <subcellularLocation>
        <location evidence="2">Nucleus speckle</location>
    </subcellularLocation>
    <subcellularLocation>
        <location evidence="2">Nucleus</location>
        <location evidence="2">Nucleoplasm</location>
    </subcellularLocation>
</comment>
<comment type="alternative products">
    <event type="alternative splicing"/>
    <isoform>
        <id>Q8K019-1</id>
        <name>1</name>
        <sequence type="displayed"/>
    </isoform>
    <isoform>
        <id>Q8K019-2</id>
        <name>2</name>
        <sequence type="described" ref="VSP_010372"/>
    </isoform>
    <isoform>
        <id>Q8K019-3</id>
        <name>3</name>
        <sequence type="described" ref="VSP_010372 VSP_010373 VSP_010374"/>
    </isoform>
</comment>
<comment type="PTM">
    <text evidence="4">Citrullinated by PADI4.</text>
</comment>
<comment type="similarity">
    <text evidence="7">Belongs to the BCLAF1/THRAP3 family.</text>
</comment>
<gene>
    <name type="primary">Bclaf1</name>
    <name type="synonym">Btf</name>
    <name type="synonym">Kiaa0164</name>
</gene>
<dbReference type="EMBL" id="AK011802">
    <property type="protein sequence ID" value="BAB27851.1"/>
    <property type="molecule type" value="mRNA"/>
</dbReference>
<dbReference type="EMBL" id="AK079110">
    <property type="protein sequence ID" value="BAC37542.1"/>
    <property type="molecule type" value="mRNA"/>
</dbReference>
<dbReference type="EMBL" id="AK088741">
    <property type="protein sequence ID" value="BAC40542.1"/>
    <property type="molecule type" value="mRNA"/>
</dbReference>
<dbReference type="EMBL" id="BC034300">
    <property type="protein sequence ID" value="AAH34300.1"/>
    <property type="molecule type" value="mRNA"/>
</dbReference>
<dbReference type="EMBL" id="AK129071">
    <property type="protein sequence ID" value="BAC97881.1"/>
    <property type="molecule type" value="mRNA"/>
</dbReference>
<dbReference type="CCDS" id="CCDS35858.1">
    <molecule id="Q8K019-1"/>
</dbReference>
<dbReference type="CCDS" id="CCDS78798.1">
    <molecule id="Q8K019-2"/>
</dbReference>
<dbReference type="RefSeq" id="NP_001020563.1">
    <molecule id="Q8K019-1"/>
    <property type="nucleotide sequence ID" value="NM_001025392.1"/>
</dbReference>
<dbReference type="RefSeq" id="NP_722482.1">
    <molecule id="Q8K019-2"/>
    <property type="nucleotide sequence ID" value="NM_153787.2"/>
</dbReference>
<dbReference type="BioGRID" id="215443">
    <property type="interactions" value="19"/>
</dbReference>
<dbReference type="FunCoup" id="Q8K019">
    <property type="interactions" value="4254"/>
</dbReference>
<dbReference type="IntAct" id="Q8K019">
    <property type="interactions" value="12"/>
</dbReference>
<dbReference type="MINT" id="Q8K019"/>
<dbReference type="STRING" id="10090.ENSMUSP00000043583"/>
<dbReference type="ChEMBL" id="CHEMBL4879494"/>
<dbReference type="GlyGen" id="Q8K019">
    <property type="glycosylation" value="1 site, 1 O-linked glycan (1 site)"/>
</dbReference>
<dbReference type="iPTMnet" id="Q8K019"/>
<dbReference type="PhosphoSitePlus" id="Q8K019"/>
<dbReference type="SwissPalm" id="Q8K019"/>
<dbReference type="jPOST" id="Q8K019"/>
<dbReference type="PaxDb" id="10090-ENSMUSP00000043583"/>
<dbReference type="PeptideAtlas" id="Q8K019"/>
<dbReference type="ProteomicsDB" id="273664">
    <molecule id="Q8K019-1"/>
</dbReference>
<dbReference type="ProteomicsDB" id="273665">
    <molecule id="Q8K019-2"/>
</dbReference>
<dbReference type="ProteomicsDB" id="273666">
    <molecule id="Q8K019-3"/>
</dbReference>
<dbReference type="Pumba" id="Q8K019"/>
<dbReference type="Antibodypedia" id="1744">
    <property type="antibodies" value="333 antibodies from 32 providers"/>
</dbReference>
<dbReference type="DNASU" id="72567"/>
<dbReference type="Ensembl" id="ENSMUST00000043881.12">
    <molecule id="Q8K019-1"/>
    <property type="protein sequence ID" value="ENSMUSP00000043583.6"/>
    <property type="gene ID" value="ENSMUSG00000037608.17"/>
</dbReference>
<dbReference type="Ensembl" id="ENSMUST00000185800.7">
    <molecule id="Q8K019-2"/>
    <property type="protein sequence ID" value="ENSMUSP00000140623.2"/>
    <property type="gene ID" value="ENSMUSG00000037608.17"/>
</dbReference>
<dbReference type="Ensembl" id="ENSMUST00000190156.7">
    <molecule id="Q8K019-3"/>
    <property type="protein sequence ID" value="ENSMUSP00000140428.2"/>
    <property type="gene ID" value="ENSMUSG00000037608.17"/>
</dbReference>
<dbReference type="GeneID" id="72567"/>
<dbReference type="KEGG" id="mmu:72567"/>
<dbReference type="UCSC" id="uc007ent.1">
    <molecule id="Q8K019-2"/>
    <property type="organism name" value="mouse"/>
</dbReference>
<dbReference type="UCSC" id="uc007enu.1">
    <molecule id="Q8K019-1"/>
    <property type="organism name" value="mouse"/>
</dbReference>
<dbReference type="AGR" id="MGI:1917580"/>
<dbReference type="CTD" id="9774"/>
<dbReference type="MGI" id="MGI:1917580">
    <property type="gene designation" value="Bclaf1"/>
</dbReference>
<dbReference type="VEuPathDB" id="HostDB:ENSMUSG00000037608"/>
<dbReference type="eggNOG" id="ENOG502QZG7">
    <property type="taxonomic scope" value="Eukaryota"/>
</dbReference>
<dbReference type="GeneTree" id="ENSGT00950000183163"/>
<dbReference type="HOGENOM" id="CLU_014485_0_0_1"/>
<dbReference type="InParanoid" id="Q8K019"/>
<dbReference type="OMA" id="KEENQKX"/>
<dbReference type="OrthoDB" id="9948513at2759"/>
<dbReference type="PhylomeDB" id="Q8K019"/>
<dbReference type="TreeFam" id="TF335939"/>
<dbReference type="BioGRID-ORCS" id="72567">
    <property type="hits" value="11 hits in 80 CRISPR screens"/>
</dbReference>
<dbReference type="ChiTaRS" id="Bclaf1">
    <property type="organism name" value="mouse"/>
</dbReference>
<dbReference type="PRO" id="PR:Q8K019"/>
<dbReference type="Proteomes" id="UP000000589">
    <property type="component" value="Chromosome 10"/>
</dbReference>
<dbReference type="RNAct" id="Q8K019">
    <property type="molecule type" value="protein"/>
</dbReference>
<dbReference type="Bgee" id="ENSMUSG00000037608">
    <property type="expression patterns" value="Expressed in undifferentiated genital tubercle and 264 other cell types or tissues"/>
</dbReference>
<dbReference type="ExpressionAtlas" id="Q8K019">
    <property type="expression patterns" value="baseline and differential"/>
</dbReference>
<dbReference type="GO" id="GO:0005737">
    <property type="term" value="C:cytoplasm"/>
    <property type="evidence" value="ECO:0007669"/>
    <property type="project" value="UniProtKB-SubCell"/>
</dbReference>
<dbReference type="GO" id="GO:0016607">
    <property type="term" value="C:nuclear speck"/>
    <property type="evidence" value="ECO:0000250"/>
    <property type="project" value="UniProtKB"/>
</dbReference>
<dbReference type="GO" id="GO:0005654">
    <property type="term" value="C:nucleoplasm"/>
    <property type="evidence" value="ECO:0000250"/>
    <property type="project" value="UniProtKB"/>
</dbReference>
<dbReference type="GO" id="GO:0005634">
    <property type="term" value="C:nucleus"/>
    <property type="evidence" value="ECO:0000266"/>
    <property type="project" value="MGI"/>
</dbReference>
<dbReference type="GO" id="GO:0003677">
    <property type="term" value="F:DNA binding"/>
    <property type="evidence" value="ECO:0000266"/>
    <property type="project" value="MGI"/>
</dbReference>
<dbReference type="GO" id="GO:1990830">
    <property type="term" value="P:cellular response to leukemia inhibitory factor"/>
    <property type="evidence" value="ECO:0000270"/>
    <property type="project" value="MGI"/>
</dbReference>
<dbReference type="GO" id="GO:0006974">
    <property type="term" value="P:DNA damage response"/>
    <property type="evidence" value="ECO:0007669"/>
    <property type="project" value="Ensembl"/>
</dbReference>
<dbReference type="GO" id="GO:0045892">
    <property type="term" value="P:negative regulation of DNA-templated transcription"/>
    <property type="evidence" value="ECO:0000266"/>
    <property type="project" value="MGI"/>
</dbReference>
<dbReference type="GO" id="GO:0043065">
    <property type="term" value="P:positive regulation of apoptotic process"/>
    <property type="evidence" value="ECO:0000266"/>
    <property type="project" value="MGI"/>
</dbReference>
<dbReference type="GO" id="GO:2000144">
    <property type="term" value="P:positive regulation of DNA-templated transcription initiation"/>
    <property type="evidence" value="ECO:0007669"/>
    <property type="project" value="Ensembl"/>
</dbReference>
<dbReference type="GO" id="GO:2001244">
    <property type="term" value="P:positive regulation of intrinsic apoptotic signaling pathway"/>
    <property type="evidence" value="ECO:0007669"/>
    <property type="project" value="Ensembl"/>
</dbReference>
<dbReference type="InterPro" id="IPR029199">
    <property type="entry name" value="THRAP3_BCLAF1"/>
</dbReference>
<dbReference type="PANTHER" id="PTHR15268:SF4">
    <property type="entry name" value="BCL-2-ASSOCIATED TRANSCRIPTION FACTOR 1"/>
    <property type="match status" value="1"/>
</dbReference>
<dbReference type="PANTHER" id="PTHR15268">
    <property type="entry name" value="THRAP3/BCLAF1"/>
    <property type="match status" value="1"/>
</dbReference>
<dbReference type="Pfam" id="PF15440">
    <property type="entry name" value="THRAP3_BCLAF1"/>
    <property type="match status" value="1"/>
</dbReference>
<reference key="1">
    <citation type="journal article" date="2005" name="Science">
        <title>The transcriptional landscape of the mammalian genome.</title>
        <authorList>
            <person name="Carninci P."/>
            <person name="Kasukawa T."/>
            <person name="Katayama S."/>
            <person name="Gough J."/>
            <person name="Frith M.C."/>
            <person name="Maeda N."/>
            <person name="Oyama R."/>
            <person name="Ravasi T."/>
            <person name="Lenhard B."/>
            <person name="Wells C."/>
            <person name="Kodzius R."/>
            <person name="Shimokawa K."/>
            <person name="Bajic V.B."/>
            <person name="Brenner S.E."/>
            <person name="Batalov S."/>
            <person name="Forrest A.R."/>
            <person name="Zavolan M."/>
            <person name="Davis M.J."/>
            <person name="Wilming L.G."/>
            <person name="Aidinis V."/>
            <person name="Allen J.E."/>
            <person name="Ambesi-Impiombato A."/>
            <person name="Apweiler R."/>
            <person name="Aturaliya R.N."/>
            <person name="Bailey T.L."/>
            <person name="Bansal M."/>
            <person name="Baxter L."/>
            <person name="Beisel K.W."/>
            <person name="Bersano T."/>
            <person name="Bono H."/>
            <person name="Chalk A.M."/>
            <person name="Chiu K.P."/>
            <person name="Choudhary V."/>
            <person name="Christoffels A."/>
            <person name="Clutterbuck D.R."/>
            <person name="Crowe M.L."/>
            <person name="Dalla E."/>
            <person name="Dalrymple B.P."/>
            <person name="de Bono B."/>
            <person name="Della Gatta G."/>
            <person name="di Bernardo D."/>
            <person name="Down T."/>
            <person name="Engstrom P."/>
            <person name="Fagiolini M."/>
            <person name="Faulkner G."/>
            <person name="Fletcher C.F."/>
            <person name="Fukushima T."/>
            <person name="Furuno M."/>
            <person name="Futaki S."/>
            <person name="Gariboldi M."/>
            <person name="Georgii-Hemming P."/>
            <person name="Gingeras T.R."/>
            <person name="Gojobori T."/>
            <person name="Green R.E."/>
            <person name="Gustincich S."/>
            <person name="Harbers M."/>
            <person name="Hayashi Y."/>
            <person name="Hensch T.K."/>
            <person name="Hirokawa N."/>
            <person name="Hill D."/>
            <person name="Huminiecki L."/>
            <person name="Iacono M."/>
            <person name="Ikeo K."/>
            <person name="Iwama A."/>
            <person name="Ishikawa T."/>
            <person name="Jakt M."/>
            <person name="Kanapin A."/>
            <person name="Katoh M."/>
            <person name="Kawasawa Y."/>
            <person name="Kelso J."/>
            <person name="Kitamura H."/>
            <person name="Kitano H."/>
            <person name="Kollias G."/>
            <person name="Krishnan S.P."/>
            <person name="Kruger A."/>
            <person name="Kummerfeld S.K."/>
            <person name="Kurochkin I.V."/>
            <person name="Lareau L.F."/>
            <person name="Lazarevic D."/>
            <person name="Lipovich L."/>
            <person name="Liu J."/>
            <person name="Liuni S."/>
            <person name="McWilliam S."/>
            <person name="Madan Babu M."/>
            <person name="Madera M."/>
            <person name="Marchionni L."/>
            <person name="Matsuda H."/>
            <person name="Matsuzawa S."/>
            <person name="Miki H."/>
            <person name="Mignone F."/>
            <person name="Miyake S."/>
            <person name="Morris K."/>
            <person name="Mottagui-Tabar S."/>
            <person name="Mulder N."/>
            <person name="Nakano N."/>
            <person name="Nakauchi H."/>
            <person name="Ng P."/>
            <person name="Nilsson R."/>
            <person name="Nishiguchi S."/>
            <person name="Nishikawa S."/>
            <person name="Nori F."/>
            <person name="Ohara O."/>
            <person name="Okazaki Y."/>
            <person name="Orlando V."/>
            <person name="Pang K.C."/>
            <person name="Pavan W.J."/>
            <person name="Pavesi G."/>
            <person name="Pesole G."/>
            <person name="Petrovsky N."/>
            <person name="Piazza S."/>
            <person name="Reed J."/>
            <person name="Reid J.F."/>
            <person name="Ring B.Z."/>
            <person name="Ringwald M."/>
            <person name="Rost B."/>
            <person name="Ruan Y."/>
            <person name="Salzberg S.L."/>
            <person name="Sandelin A."/>
            <person name="Schneider C."/>
            <person name="Schoenbach C."/>
            <person name="Sekiguchi K."/>
            <person name="Semple C.A."/>
            <person name="Seno S."/>
            <person name="Sessa L."/>
            <person name="Sheng Y."/>
            <person name="Shibata Y."/>
            <person name="Shimada H."/>
            <person name="Shimada K."/>
            <person name="Silva D."/>
            <person name="Sinclair B."/>
            <person name="Sperling S."/>
            <person name="Stupka E."/>
            <person name="Sugiura K."/>
            <person name="Sultana R."/>
            <person name="Takenaka Y."/>
            <person name="Taki K."/>
            <person name="Tammoja K."/>
            <person name="Tan S.L."/>
            <person name="Tang S."/>
            <person name="Taylor M.S."/>
            <person name="Tegner J."/>
            <person name="Teichmann S.A."/>
            <person name="Ueda H.R."/>
            <person name="van Nimwegen E."/>
            <person name="Verardo R."/>
            <person name="Wei C.L."/>
            <person name="Yagi K."/>
            <person name="Yamanishi H."/>
            <person name="Zabarovsky E."/>
            <person name="Zhu S."/>
            <person name="Zimmer A."/>
            <person name="Hide W."/>
            <person name="Bult C."/>
            <person name="Grimmond S.M."/>
            <person name="Teasdale R.D."/>
            <person name="Liu E.T."/>
            <person name="Brusic V."/>
            <person name="Quackenbush J."/>
            <person name="Wahlestedt C."/>
            <person name="Mattick J.S."/>
            <person name="Hume D.A."/>
            <person name="Kai C."/>
            <person name="Sasaki D."/>
            <person name="Tomaru Y."/>
            <person name="Fukuda S."/>
            <person name="Kanamori-Katayama M."/>
            <person name="Suzuki M."/>
            <person name="Aoki J."/>
            <person name="Arakawa T."/>
            <person name="Iida J."/>
            <person name="Imamura K."/>
            <person name="Itoh M."/>
            <person name="Kato T."/>
            <person name="Kawaji H."/>
            <person name="Kawagashira N."/>
            <person name="Kawashima T."/>
            <person name="Kojima M."/>
            <person name="Kondo S."/>
            <person name="Konno H."/>
            <person name="Nakano K."/>
            <person name="Ninomiya N."/>
            <person name="Nishio T."/>
            <person name="Okada M."/>
            <person name="Plessy C."/>
            <person name="Shibata K."/>
            <person name="Shiraki T."/>
            <person name="Suzuki S."/>
            <person name="Tagami M."/>
            <person name="Waki K."/>
            <person name="Watahiki A."/>
            <person name="Okamura-Oho Y."/>
            <person name="Suzuki H."/>
            <person name="Kawai J."/>
            <person name="Hayashizaki Y."/>
        </authorList>
    </citation>
    <scope>NUCLEOTIDE SEQUENCE [LARGE SCALE MRNA] (ISOFORM 3)</scope>
    <scope>NUCLEOTIDE SEQUENCE [LARGE SCALE MRNA] OF 1-164 (ISOFORM 1)</scope>
    <scope>NUCLEOTIDE SEQUENCE [LARGE SCALE MRNA] OF 499-917 (ISOFORM 2)</scope>
    <source>
        <strain>C57BL/6J</strain>
        <strain>NOD</strain>
        <tissue>Embryo</tissue>
        <tissue>Thymus</tissue>
    </source>
</reference>
<reference key="2">
    <citation type="journal article" date="2004" name="Genome Res.">
        <title>The status, quality, and expansion of the NIH full-length cDNA project: the Mammalian Gene Collection (MGC).</title>
        <authorList>
            <consortium name="The MGC Project Team"/>
        </authorList>
    </citation>
    <scope>NUCLEOTIDE SEQUENCE [LARGE SCALE MRNA] (ISOFORM 2)</scope>
    <source>
        <tissue>Retina</tissue>
    </source>
</reference>
<reference key="3">
    <citation type="journal article" date="2003" name="DNA Res.">
        <title>Prediction of the coding sequences of mouse homologues of KIAA gene: III. The complete nucleotide sequences of 500 mouse KIAA-homologous cDNAs identified by screening of terminal sequences of cDNA clones randomly sampled from size-fractionated libraries.</title>
        <authorList>
            <person name="Okazaki N."/>
            <person name="Kikuno R."/>
            <person name="Ohara R."/>
            <person name="Inamoto S."/>
            <person name="Koseki H."/>
            <person name="Hiraoka S."/>
            <person name="Saga Y."/>
            <person name="Nagase T."/>
            <person name="Ohara O."/>
            <person name="Koga H."/>
        </authorList>
    </citation>
    <scope>NUCLEOTIDE SEQUENCE [LARGE SCALE MRNA] OF 155-917 (ISOFORMS 1/2)</scope>
    <source>
        <tissue>Brain</tissue>
    </source>
</reference>
<reference key="4">
    <citation type="journal article" date="2006" name="Mol. Cell. Proteomics">
        <title>Comprehensive identification of phosphorylation sites in postsynaptic density preparations.</title>
        <authorList>
            <person name="Trinidad J.C."/>
            <person name="Specht C.G."/>
            <person name="Thalhammer A."/>
            <person name="Schoepfer R."/>
            <person name="Burlingame A.L."/>
        </authorList>
    </citation>
    <scope>PHOSPHORYLATION [LARGE SCALE ANALYSIS] AT SER-177</scope>
    <scope>IDENTIFICATION BY MASS SPECTROMETRY [LARGE SCALE ANALYSIS]</scope>
    <source>
        <tissue>Brain</tissue>
    </source>
</reference>
<reference key="5">
    <citation type="journal article" date="2007" name="Proc. Natl. Acad. Sci. U.S.A.">
        <title>Large-scale phosphorylation analysis of mouse liver.</title>
        <authorList>
            <person name="Villen J."/>
            <person name="Beausoleil S.A."/>
            <person name="Gerber S.A."/>
            <person name="Gygi S.P."/>
        </authorList>
    </citation>
    <scope>PHOSPHORYLATION [LARGE SCALE ANALYSIS] AT SER-177; SER-289; SER-383; SER-395; THR-400 AND SER-510</scope>
    <scope>IDENTIFICATION BY MASS SPECTROMETRY [LARGE SCALE ANALYSIS]</scope>
    <source>
        <tissue>Liver</tissue>
    </source>
</reference>
<reference key="6">
    <citation type="journal article" date="2008" name="J. Proteome Res.">
        <title>Specific phosphopeptide enrichment with immobilized titanium ion affinity chromatography adsorbent for phosphoproteome analysis.</title>
        <authorList>
            <person name="Zhou H."/>
            <person name="Ye M."/>
            <person name="Dong J."/>
            <person name="Han G."/>
            <person name="Jiang X."/>
            <person name="Wu R."/>
            <person name="Zou H."/>
        </authorList>
    </citation>
    <scope>IDENTIFICATION BY MASS SPECTROMETRY [LARGE SCALE ANALYSIS]</scope>
    <source>
        <tissue>Liver</tissue>
    </source>
</reference>
<reference key="7">
    <citation type="journal article" date="2009" name="Immunity">
        <title>The phagosomal proteome in interferon-gamma-activated macrophages.</title>
        <authorList>
            <person name="Trost M."/>
            <person name="English L."/>
            <person name="Lemieux S."/>
            <person name="Courcelles M."/>
            <person name="Desjardins M."/>
            <person name="Thibault P."/>
        </authorList>
    </citation>
    <scope>PHOSPHORYLATION [LARGE SCALE ANALYSIS] AT SER-177; SER-383; SER-395 AND SER-656</scope>
    <scope>IDENTIFICATION BY MASS SPECTROMETRY [LARGE SCALE ANALYSIS]</scope>
</reference>
<reference key="8">
    <citation type="journal article" date="2009" name="Mol. Cell. Proteomics">
        <title>Large scale localization of protein phosphorylation by use of electron capture dissociation mass spectrometry.</title>
        <authorList>
            <person name="Sweet S.M."/>
            <person name="Bailey C.M."/>
            <person name="Cunningham D.L."/>
            <person name="Heath J.K."/>
            <person name="Cooper H.J."/>
        </authorList>
    </citation>
    <scope>PHOSPHORYLATION [LARGE SCALE ANALYSIS] AT SER-177; SER-529 AND SER-656</scope>
    <scope>IDENTIFICATION BY MASS SPECTROMETRY [LARGE SCALE ANALYSIS]</scope>
    <source>
        <tissue>Embryonic fibroblast</tissue>
    </source>
</reference>
<reference key="9">
    <citation type="journal article" date="2010" name="Cell">
        <title>A tissue-specific atlas of mouse protein phosphorylation and expression.</title>
        <authorList>
            <person name="Huttlin E.L."/>
            <person name="Jedrychowski M.P."/>
            <person name="Elias J.E."/>
            <person name="Goswami T."/>
            <person name="Rad R."/>
            <person name="Beausoleil S.A."/>
            <person name="Villen J."/>
            <person name="Haas W."/>
            <person name="Sowa M.E."/>
            <person name="Gygi S.P."/>
        </authorList>
    </citation>
    <scope>PHOSPHORYLATION [LARGE SCALE ANALYSIS] AT SER-177; SER-196; SER-198; SER-221; SER-284; SER-289; SER-299; THR-305; SER-383; SER-387; SER-395; THR-400; SER-494 AND SER-510</scope>
    <scope>IDENTIFICATION BY MASS SPECTROMETRY [LARGE SCALE ANALYSIS]</scope>
    <source>
        <tissue>Brain</tissue>
        <tissue>Brown adipose tissue</tissue>
        <tissue>Heart</tissue>
        <tissue>Kidney</tissue>
        <tissue>Liver</tissue>
        <tissue>Lung</tissue>
        <tissue>Pancreas</tissue>
        <tissue>Spleen</tissue>
        <tissue>Testis</tissue>
    </source>
</reference>
<reference key="10">
    <citation type="journal article" date="2013" name="Mol. Cell">
        <title>SIRT5-mediated lysine desuccinylation impacts diverse metabolic pathways.</title>
        <authorList>
            <person name="Park J."/>
            <person name="Chen Y."/>
            <person name="Tishkoff D.X."/>
            <person name="Peng C."/>
            <person name="Tan M."/>
            <person name="Dai L."/>
            <person name="Xie Z."/>
            <person name="Zhang Y."/>
            <person name="Zwaans B.M."/>
            <person name="Skinner M.E."/>
            <person name="Lombard D.B."/>
            <person name="Zhao Y."/>
        </authorList>
    </citation>
    <scope>ACETYLATION [LARGE SCALE ANALYSIS] AT LYS-330; LYS-419; LYS-435 AND LYS-473</scope>
    <scope>IDENTIFICATION BY MASS SPECTROMETRY [LARGE SCALE ANALYSIS]</scope>
    <source>
        <tissue>Embryonic fibroblast</tissue>
    </source>
</reference>
<reference key="11">
    <citation type="journal article" date="2014" name="Nature">
        <title>Citrullination regulates pluripotency and histone H1 binding to chromatin.</title>
        <authorList>
            <person name="Christophorou M.A."/>
            <person name="Castelo-Branco G."/>
            <person name="Halley-Stott R.P."/>
            <person name="Oliveira C.S."/>
            <person name="Loos R."/>
            <person name="Radzisheuskaya A."/>
            <person name="Mowen K.A."/>
            <person name="Bertone P."/>
            <person name="Silva J.C."/>
            <person name="Zernicka-Goetz M."/>
            <person name="Nielsen M.L."/>
            <person name="Gurdon J.B."/>
            <person name="Kouzarides T."/>
        </authorList>
    </citation>
    <scope>CITRULLINATION AT ARG-802</scope>
</reference>
<feature type="chain" id="PRO_0000064889" description="Bcl-2-associated transcription factor 1">
    <location>
        <begin position="1"/>
        <end position="919"/>
    </location>
</feature>
<feature type="region of interest" description="Disordered" evidence="3">
    <location>
        <begin position="1"/>
        <end position="454"/>
    </location>
</feature>
<feature type="region of interest" description="Disordered" evidence="3">
    <location>
        <begin position="468"/>
        <end position="499"/>
    </location>
</feature>
<feature type="region of interest" description="Disordered" evidence="3">
    <location>
        <begin position="670"/>
        <end position="793"/>
    </location>
</feature>
<feature type="region of interest" description="Disordered" evidence="3">
    <location>
        <begin position="809"/>
        <end position="839"/>
    </location>
</feature>
<feature type="region of interest" description="Disordered" evidence="3">
    <location>
        <begin position="861"/>
        <end position="919"/>
    </location>
</feature>
<feature type="compositionally biased region" description="Basic residues" evidence="3">
    <location>
        <begin position="23"/>
        <end position="46"/>
    </location>
</feature>
<feature type="compositionally biased region" description="Basic and acidic residues" evidence="3">
    <location>
        <begin position="47"/>
        <end position="63"/>
    </location>
</feature>
<feature type="compositionally biased region" description="Basic residues" evidence="3">
    <location>
        <begin position="87"/>
        <end position="134"/>
    </location>
</feature>
<feature type="compositionally biased region" description="Low complexity" evidence="3">
    <location>
        <begin position="135"/>
        <end position="154"/>
    </location>
</feature>
<feature type="compositionally biased region" description="Basic and acidic residues" evidence="3">
    <location>
        <begin position="160"/>
        <end position="196"/>
    </location>
</feature>
<feature type="compositionally biased region" description="Basic and acidic residues" evidence="3">
    <location>
        <begin position="351"/>
        <end position="371"/>
    </location>
</feature>
<feature type="compositionally biased region" description="Basic and acidic residues" evidence="3">
    <location>
        <begin position="382"/>
        <end position="395"/>
    </location>
</feature>
<feature type="compositionally biased region" description="Basic and acidic residues" evidence="3">
    <location>
        <begin position="444"/>
        <end position="454"/>
    </location>
</feature>
<feature type="compositionally biased region" description="Basic and acidic residues" evidence="3">
    <location>
        <begin position="470"/>
        <end position="499"/>
    </location>
</feature>
<feature type="compositionally biased region" description="Basic and acidic residues" evidence="3">
    <location>
        <begin position="670"/>
        <end position="749"/>
    </location>
</feature>
<feature type="compositionally biased region" description="Low complexity" evidence="3">
    <location>
        <begin position="750"/>
        <end position="761"/>
    </location>
</feature>
<feature type="compositionally biased region" description="Basic and acidic residues" evidence="3">
    <location>
        <begin position="762"/>
        <end position="784"/>
    </location>
</feature>
<feature type="compositionally biased region" description="Low complexity" evidence="3">
    <location>
        <begin position="809"/>
        <end position="824"/>
    </location>
</feature>
<feature type="compositionally biased region" description="Acidic residues" evidence="3">
    <location>
        <begin position="896"/>
        <end position="906"/>
    </location>
</feature>
<feature type="compositionally biased region" description="Basic and acidic residues" evidence="3">
    <location>
        <begin position="907"/>
        <end position="919"/>
    </location>
</feature>
<feature type="modified residue" description="Phosphoserine" evidence="2">
    <location>
        <position position="102"/>
    </location>
</feature>
<feature type="modified residue" description="Phosphoserine" evidence="2">
    <location>
        <position position="104"/>
    </location>
</feature>
<feature type="modified residue" description="N6-acetyllysine" evidence="2">
    <location>
        <position position="152"/>
    </location>
</feature>
<feature type="modified residue" description="Phosphoserine" evidence="8 9 10 11 12">
    <location>
        <position position="177"/>
    </location>
</feature>
<feature type="modified residue" description="Phosphoserine" evidence="2">
    <location>
        <position position="181"/>
    </location>
</feature>
<feature type="modified residue" description="Phosphoserine" evidence="12">
    <location>
        <position position="196"/>
    </location>
</feature>
<feature type="modified residue" description="Phosphoserine" evidence="12">
    <location>
        <position position="198"/>
    </location>
</feature>
<feature type="modified residue" description="Phosphotyrosine" evidence="2">
    <location>
        <position position="218"/>
    </location>
</feature>
<feature type="modified residue" description="Phosphoserine" evidence="12">
    <location>
        <position position="221"/>
    </location>
</feature>
<feature type="modified residue" description="Phosphoserine" evidence="2">
    <location>
        <position position="258"/>
    </location>
</feature>
<feature type="modified residue" description="Phosphoserine" evidence="2">
    <location>
        <position position="261"/>
    </location>
</feature>
<feature type="modified residue" description="Phosphoserine" evidence="2">
    <location>
        <position position="263"/>
    </location>
</feature>
<feature type="modified residue" description="Phosphoserine" evidence="2">
    <location>
        <position position="267"/>
    </location>
</feature>
<feature type="modified residue" description="Phosphotyrosine" evidence="2">
    <location>
        <position position="283"/>
    </location>
</feature>
<feature type="modified residue" description="Phosphoserine" evidence="12">
    <location>
        <position position="284"/>
    </location>
</feature>
<feature type="modified residue" description="Phosphoserine" evidence="9 12">
    <location>
        <position position="289"/>
    </location>
</feature>
<feature type="modified residue" description="Phosphoserine" evidence="2">
    <location>
        <position position="296"/>
    </location>
</feature>
<feature type="modified residue" description="Phosphoserine" evidence="12">
    <location>
        <position position="299"/>
    </location>
</feature>
<feature type="modified residue" description="Phosphothreonine" evidence="12">
    <location>
        <position position="305"/>
    </location>
</feature>
<feature type="modified residue" description="Phosphoserine" evidence="2">
    <location>
        <position position="314"/>
    </location>
</feature>
<feature type="modified residue" description="N6-acetyllysine; alternate" evidence="13">
    <location>
        <position position="330"/>
    </location>
</feature>
<feature type="modified residue" description="Phosphothreonine" evidence="2">
    <location>
        <position position="339"/>
    </location>
</feature>
<feature type="modified residue" description="Phosphotyrosine" evidence="2">
    <location>
        <position position="381"/>
    </location>
</feature>
<feature type="modified residue" description="Phosphoserine" evidence="9 11 12">
    <location>
        <position position="383"/>
    </location>
</feature>
<feature type="modified residue" description="Phosphoserine" evidence="12">
    <location>
        <position position="387"/>
    </location>
</feature>
<feature type="modified residue" description="Phosphoserine" evidence="9 11 12">
    <location>
        <position position="395"/>
    </location>
</feature>
<feature type="modified residue" description="Phosphothreonine" evidence="9 12">
    <location>
        <position position="400"/>
    </location>
</feature>
<feature type="modified residue" description="N6-acetyllysine; alternate" evidence="13">
    <location>
        <position position="419"/>
    </location>
</feature>
<feature type="modified residue" description="Phosphoserine" evidence="2">
    <location>
        <position position="420"/>
    </location>
</feature>
<feature type="modified residue" description="Phosphoserine" evidence="2">
    <location>
        <position position="425"/>
    </location>
</feature>
<feature type="modified residue" description="Phosphothreonine" evidence="2">
    <location>
        <position position="429"/>
    </location>
</feature>
<feature type="modified residue" description="N6-acetyllysine; alternate" evidence="13">
    <location>
        <position position="435"/>
    </location>
</feature>
<feature type="modified residue" description="Phosphoserine" evidence="2">
    <location>
        <position position="448"/>
    </location>
</feature>
<feature type="modified residue" description="Phosphoserine" evidence="2">
    <location>
        <position position="470"/>
    </location>
</feature>
<feature type="modified residue" description="N6-acetyllysine" evidence="13">
    <location>
        <position position="473"/>
    </location>
</feature>
<feature type="modified residue" description="Phosphoserine" evidence="12">
    <location>
        <position position="494"/>
    </location>
</feature>
<feature type="modified residue" description="Phosphoserine" evidence="2">
    <location>
        <position position="500"/>
    </location>
</feature>
<feature type="modified residue" description="Phosphoserine" evidence="9 12">
    <location>
        <position position="510"/>
    </location>
</feature>
<feature type="modified residue" description="Phosphoserine" evidence="2">
    <location>
        <position position="523"/>
    </location>
</feature>
<feature type="modified residue" description="Phosphoserine" evidence="10">
    <location>
        <position position="529"/>
    </location>
</feature>
<feature type="modified residue" description="Phosphoserine" evidence="2">
    <location>
        <position position="557"/>
    </location>
</feature>
<feature type="modified residue" description="Phosphoserine" evidence="2">
    <location>
        <position position="562"/>
    </location>
</feature>
<feature type="modified residue" description="Phosphothreonine" evidence="2">
    <location>
        <position position="564"/>
    </location>
</feature>
<feature type="modified residue" description="Phosphoserine" evidence="2">
    <location>
        <position position="576"/>
    </location>
</feature>
<feature type="modified residue" description="Phosphoserine" evidence="2">
    <location>
        <position position="646"/>
    </location>
</feature>
<feature type="modified residue" description="Phosphoserine" evidence="10 11">
    <location>
        <position position="656"/>
    </location>
</feature>
<feature type="modified residue" description="Phosphoserine" evidence="2">
    <location>
        <position position="658"/>
    </location>
</feature>
<feature type="modified residue" description="Phosphoserine" evidence="2">
    <location>
        <position position="688"/>
    </location>
</feature>
<feature type="modified residue" description="Phosphoserine" evidence="2">
    <location>
        <position position="759"/>
    </location>
</feature>
<feature type="modified residue" description="Citrulline" evidence="4">
    <location>
        <position position="802"/>
    </location>
</feature>
<feature type="modified residue" description="Omega-N-methylarginine" evidence="2">
    <location>
        <position position="808"/>
    </location>
</feature>
<feature type="cross-link" description="Glycyl lysine isopeptide (Lys-Gly) (interchain with G-Cter in SUMO2)" evidence="2">
    <location>
        <position position="188"/>
    </location>
</feature>
<feature type="cross-link" description="Glycyl lysine isopeptide (Lys-Gly) (interchain with G-Cter in SUMO2); alternate" evidence="2">
    <location>
        <position position="330"/>
    </location>
</feature>
<feature type="cross-link" description="Glycyl lysine isopeptide (Lys-Gly) (interchain with G-Cter in SUMO2)" evidence="2">
    <location>
        <position position="411"/>
    </location>
</feature>
<feature type="cross-link" description="Glycyl lysine isopeptide (Lys-Gly) (interchain with G-Cter in SUMO2); alternate" evidence="2">
    <location>
        <position position="419"/>
    </location>
</feature>
<feature type="cross-link" description="Glycyl lysine isopeptide (Lys-Gly) (interchain with G-Cter in SUMO2); alternate" evidence="2">
    <location>
        <position position="435"/>
    </location>
</feature>
<feature type="cross-link" description="Glycyl lysine isopeptide (Lys-Gly) (interchain with G-Cter in SUMO2)" evidence="2">
    <location>
        <position position="455"/>
    </location>
</feature>
<feature type="cross-link" description="Glycyl lysine isopeptide (Lys-Gly) (interchain with G-Cter in SUMO2)" evidence="2">
    <location>
        <position position="460"/>
    </location>
</feature>
<feature type="cross-link" description="Glycyl lysine isopeptide (Lys-Gly) (interchain with G-Cter in SUMO2)" evidence="2">
    <location>
        <position position="489"/>
    </location>
</feature>
<feature type="cross-link" description="Glycyl lysine isopeptide (Lys-Gly) (interchain with G-Cter in SUMO2)" evidence="2">
    <location>
        <position position="490"/>
    </location>
</feature>
<feature type="cross-link" description="Glycyl lysine isopeptide (Lys-Gly) (interchain with G-Cter in SUMO2)" evidence="2">
    <location>
        <position position="499"/>
    </location>
</feature>
<feature type="cross-link" description="Glycyl lysine isopeptide (Lys-Gly) (interchain with G-Cter in SUMO2)" evidence="2">
    <location>
        <position position="534"/>
    </location>
</feature>
<feature type="cross-link" description="Glycyl lysine isopeptide (Lys-Gly) (interchain with G-Cter in SUMO2)" evidence="2">
    <location>
        <position position="546"/>
    </location>
</feature>
<feature type="cross-link" description="Glycyl lysine isopeptide (Lys-Gly) (interchain with G-Cter in SUMO2)" evidence="2">
    <location>
        <position position="548"/>
    </location>
</feature>
<feature type="cross-link" description="Glycyl lysine isopeptide (Lys-Gly) (interchain with G-Cter in SUMO2)" evidence="2">
    <location>
        <position position="565"/>
    </location>
</feature>
<feature type="cross-link" description="Glycyl lysine isopeptide (Lys-Gly) (interchain with G-Cter in SUMO1); alternate" evidence="2">
    <location>
        <position position="578"/>
    </location>
</feature>
<feature type="cross-link" description="Glycyl lysine isopeptide (Lys-Gly) (interchain with G-Cter in SUMO2); alternate" evidence="2">
    <location>
        <position position="578"/>
    </location>
</feature>
<feature type="cross-link" description="Glycyl lysine isopeptide (Lys-Gly) (interchain with G-Cter in SUMO2)" evidence="2">
    <location>
        <position position="591"/>
    </location>
</feature>
<feature type="cross-link" description="Glycyl lysine isopeptide (Lys-Gly) (interchain with G-Cter in SUMO2)" evidence="2">
    <location>
        <position position="597"/>
    </location>
</feature>
<feature type="cross-link" description="Glycyl lysine isopeptide (Lys-Gly) (interchain with G-Cter in SUMO2)" evidence="2">
    <location>
        <position position="620"/>
    </location>
</feature>
<feature type="cross-link" description="Glycyl lysine isopeptide (Lys-Gly) (interchain with G-Cter in SUMO2)" evidence="2">
    <location>
        <position position="674"/>
    </location>
</feature>
<feature type="cross-link" description="Glycyl lysine isopeptide (Lys-Gly) (interchain with G-Cter in SUMO2)" evidence="2">
    <location>
        <position position="777"/>
    </location>
</feature>
<feature type="cross-link" description="Glycyl lysine isopeptide (Lys-Gly) (interchain with G-Cter in SUMO2)" evidence="2">
    <location>
        <position position="783"/>
    </location>
</feature>
<feature type="cross-link" description="Glycyl lysine isopeptide (Lys-Gly) (interchain with G-Cter in SUMO1); alternate" evidence="2">
    <location>
        <position position="830"/>
    </location>
</feature>
<feature type="cross-link" description="Glycyl lysine isopeptide (Lys-Gly) (interchain with G-Cter in SUMO2); alternate" evidence="2">
    <location>
        <position position="830"/>
    </location>
</feature>
<feature type="cross-link" description="Glycyl lysine isopeptide (Lys-Gly) (interchain with G-Cter in SUMO2)" evidence="2">
    <location>
        <position position="910"/>
    </location>
</feature>
<feature type="splice variant" id="VSP_010372" description="In isoform 2 and isoform 3." evidence="5 6">
    <location>
        <begin position="35"/>
        <end position="36"/>
    </location>
</feature>
<feature type="splice variant" id="VSP_010373" description="In isoform 3." evidence="6">
    <original>HKGRERDHSRS</original>
    <variation>NVFVFYTAYGG</variation>
    <location>
        <begin position="740"/>
        <end position="750"/>
    </location>
</feature>
<feature type="splice variant" id="VSP_010374" description="In isoform 3." evidence="6">
    <location>
        <begin position="751"/>
        <end position="919"/>
    </location>
</feature>
<feature type="sequence conflict" description="In Ref. 1; BAC37542." evidence="7" ref="1">
    <original>E</original>
    <variation>K</variation>
    <location>
        <position position="616"/>
    </location>
</feature>
<feature type="sequence conflict" description="In Ref. 1; BAC37542." evidence="7" ref="1">
    <original>A</original>
    <variation>T</variation>
    <location>
        <position position="667"/>
    </location>
</feature>
<accession>Q8K019</accession>
<accession>Q8BNZ0</accession>
<accession>Q8C2E9</accession>
<accession>Q9CSW5</accession>
<keyword id="KW-0007">Acetylation</keyword>
<keyword id="KW-0025">Alternative splicing</keyword>
<keyword id="KW-0164">Citrullination</keyword>
<keyword id="KW-0963">Cytoplasm</keyword>
<keyword id="KW-0238">DNA-binding</keyword>
<keyword id="KW-1017">Isopeptide bond</keyword>
<keyword id="KW-0488">Methylation</keyword>
<keyword id="KW-0539">Nucleus</keyword>
<keyword id="KW-0597">Phosphoprotein</keyword>
<keyword id="KW-1185">Reference proteome</keyword>
<keyword id="KW-0678">Repressor</keyword>
<keyword id="KW-0804">Transcription</keyword>
<keyword id="KW-0805">Transcription regulation</keyword>
<keyword id="KW-0832">Ubl conjugation</keyword>
<evidence type="ECO:0000250" key="1"/>
<evidence type="ECO:0000250" key="2">
    <source>
        <dbReference type="UniProtKB" id="Q9NYF8"/>
    </source>
</evidence>
<evidence type="ECO:0000256" key="3">
    <source>
        <dbReference type="SAM" id="MobiDB-lite"/>
    </source>
</evidence>
<evidence type="ECO:0000269" key="4">
    <source>
    </source>
</evidence>
<evidence type="ECO:0000303" key="5">
    <source>
    </source>
</evidence>
<evidence type="ECO:0000303" key="6">
    <source>
    </source>
</evidence>
<evidence type="ECO:0000305" key="7"/>
<evidence type="ECO:0007744" key="8">
    <source>
    </source>
</evidence>
<evidence type="ECO:0007744" key="9">
    <source>
    </source>
</evidence>
<evidence type="ECO:0007744" key="10">
    <source>
    </source>
</evidence>
<evidence type="ECO:0007744" key="11">
    <source>
    </source>
</evidence>
<evidence type="ECO:0007744" key="12">
    <source>
    </source>
</evidence>
<evidence type="ECO:0007744" key="13">
    <source>
    </source>
</evidence>
<protein>
    <recommendedName>
        <fullName>Bcl-2-associated transcription factor 1</fullName>
        <shortName>Btf</shortName>
    </recommendedName>
</protein>
<proteinExistence type="evidence at protein level"/>
<name>BCLF1_MOUSE</name>
<sequence length="919" mass="106002">MGRSNSRSHSSRSKSRSQSSSRSRSRSHSRKKRYSSRSRSRTYSRSRSRDRIYSRDYRRDYRNNRGMRRPYGYRGRGRGYYQGGGGRYHRGGYRPVWNRRHSRSPRRGRSRSRSPKRRSVSSQRSRSRSRRSYRSSRSPRSSSSRSSSPYSKSPVSKRRGSQEKQTKKAEGEPQEESPLKSKSQEEPKDTFEHDPSESIDEFNKSATSGDIWPGLSAYDNSPRSPHSPSPIATPPSQSSSCSDAPMLSTVHSAKNTPSQHSHSIQHSPERSGSGSVGNGSSRYSPSQNSPIHHIPSRRSPAKTITPQNAPREESRGRSSFYPEGDQETAKTGKFLKRFTDEESRVFLLDRGNIRDKEAPKEKGSEKGRADGDWDDQEVLDYFSDKESAKQKFHDSEGDDTEETEDYRQFRKSVLADQGKSFATSSHRNTEEEGPKYKSKVSLKGNRESDGFREEKNYKLKETAYIVERPSTAKDKHKEEDKGSDRITVKKEVQSPEQVKSEKLKELFDYSPPLHKSLDAREKSIFREESPLRIKMIASDSHRPEVKLKMAPVPLDDSNRPASLTKDRLLASTLVHSVKKEQEFRSIFDHIKLPQANKSTSESFIQHIVSLVHHVKEQYFKSPAVTLNERFTSYQKATEEHSTRQKSPEIHRRIDISPSALRKHTRLAGEERGFKEEIQKGDKKLRCDSADLRHDIDRRRKERSKERGDSKGSRESSGSRKQEKTPKDYKEYKPYKDDSKHKGRERDHSRSSSSSASPSSPSSREEKESKKEREEEFKTHHEMKDYSGFAGVSRPRGTFFRIRGRGRARGVFAGTNTGPNNSNTTFQKRPKEEEWDPEYTPKSKKYFLHDDRDDGVDYWAKRGRGRGTFQRGRGRFNFKKSGSSPKWTHDKYQGDGIVEDDEETMENNEEKKDRRKEEKE</sequence>
<organism>
    <name type="scientific">Mus musculus</name>
    <name type="common">Mouse</name>
    <dbReference type="NCBI Taxonomy" id="10090"/>
    <lineage>
        <taxon>Eukaryota</taxon>
        <taxon>Metazoa</taxon>
        <taxon>Chordata</taxon>
        <taxon>Craniata</taxon>
        <taxon>Vertebrata</taxon>
        <taxon>Euteleostomi</taxon>
        <taxon>Mammalia</taxon>
        <taxon>Eutheria</taxon>
        <taxon>Euarchontoglires</taxon>
        <taxon>Glires</taxon>
        <taxon>Rodentia</taxon>
        <taxon>Myomorpha</taxon>
        <taxon>Muroidea</taxon>
        <taxon>Muridae</taxon>
        <taxon>Murinae</taxon>
        <taxon>Mus</taxon>
        <taxon>Mus</taxon>
    </lineage>
</organism>